<gene>
    <name evidence="1" type="primary">mhpB</name>
    <name type="ordered locus">Reut_A0271</name>
</gene>
<comment type="function">
    <text evidence="1">Catalyzes the non-heme iron(II)-dependent oxidative cleavage of 2,3-dihydroxyphenylpropionic acid and 2,3-dihydroxicinnamic acid into 2-hydroxy-6-ketononadienedioate and 2-hydroxy-6-ketononatrienedioate, respectively.</text>
</comment>
<comment type="catalytic activity">
    <reaction evidence="1">
        <text>3-(2,3-dihydroxyphenyl)propanoate + O2 = (2Z,4E)-2-hydroxy-6-oxonona-2,4-dienedioate + H(+)</text>
        <dbReference type="Rhea" id="RHEA:23840"/>
        <dbReference type="ChEBI" id="CHEBI:15378"/>
        <dbReference type="ChEBI" id="CHEBI:15379"/>
        <dbReference type="ChEBI" id="CHEBI:46951"/>
        <dbReference type="ChEBI" id="CHEBI:66887"/>
        <dbReference type="EC" id="1.13.11.16"/>
    </reaction>
</comment>
<comment type="catalytic activity">
    <reaction evidence="1">
        <text>(2E)-3-(2,3-dihydroxyphenyl)prop-2-enoate + O2 = (2Z,4E,7E)-2-hydroxy-6-oxonona-2,4,7-trienedioate + H(+)</text>
        <dbReference type="Rhea" id="RHEA:25054"/>
        <dbReference type="ChEBI" id="CHEBI:15378"/>
        <dbReference type="ChEBI" id="CHEBI:15379"/>
        <dbReference type="ChEBI" id="CHEBI:58642"/>
        <dbReference type="ChEBI" id="CHEBI:66888"/>
        <dbReference type="EC" id="1.13.11.16"/>
    </reaction>
</comment>
<comment type="cofactor">
    <cofactor evidence="1">
        <name>Fe(2+)</name>
        <dbReference type="ChEBI" id="CHEBI:29033"/>
    </cofactor>
</comment>
<comment type="pathway">
    <text evidence="1">Aromatic compound metabolism; 3-phenylpropanoate degradation.</text>
</comment>
<comment type="subunit">
    <text evidence="1">Homotetramer.</text>
</comment>
<comment type="similarity">
    <text evidence="1">Belongs to the LigB/MhpB extradiol dioxygenase family.</text>
</comment>
<sequence length="314" mass="33299">MPIQLECLSHTPLHGYVDPAPEVVAEVERVQAAARDRVRAFDPELVVVFAPDHFNGFFYDVMPPFCIGAAATAIGDFKSLAGKLPVPADLALSLAESVMAADIDVALSHRMQVDHGCADALAALTGSLHRYPVIPVFINSVAPPMATLRRARLLGDAVGRFLSRAGKRVLVVGSGGISHEPPVPELAGASEEVAERLIAGRNPSPESRAARQARTVAAAKSFVAGDSHLHPLNPEWDRAFLSLLASGELTAVDGMTNDAITRDGGKSAHEIRTWVAAFGALAAYGPYRASLDFYRAIPEWIAGFATMHAEPAAV</sequence>
<name>MHPB_CUPPJ</name>
<keyword id="KW-0058">Aromatic hydrocarbons catabolism</keyword>
<keyword id="KW-0223">Dioxygenase</keyword>
<keyword id="KW-0408">Iron</keyword>
<keyword id="KW-0560">Oxidoreductase</keyword>
<organism>
    <name type="scientific">Cupriavidus pinatubonensis (strain JMP 134 / LMG 1197)</name>
    <name type="common">Cupriavidus necator (strain JMP 134)</name>
    <dbReference type="NCBI Taxonomy" id="264198"/>
    <lineage>
        <taxon>Bacteria</taxon>
        <taxon>Pseudomonadati</taxon>
        <taxon>Pseudomonadota</taxon>
        <taxon>Betaproteobacteria</taxon>
        <taxon>Burkholderiales</taxon>
        <taxon>Burkholderiaceae</taxon>
        <taxon>Cupriavidus</taxon>
    </lineage>
</organism>
<reference key="1">
    <citation type="journal article" date="2010" name="PLoS ONE">
        <title>The complete multipartite genome sequence of Cupriavidus necator JMP134, a versatile pollutant degrader.</title>
        <authorList>
            <person name="Lykidis A."/>
            <person name="Perez-Pantoja D."/>
            <person name="Ledger T."/>
            <person name="Mavromatis K."/>
            <person name="Anderson I.J."/>
            <person name="Ivanova N.N."/>
            <person name="Hooper S.D."/>
            <person name="Lapidus A."/>
            <person name="Lucas S."/>
            <person name="Gonzalez B."/>
            <person name="Kyrpides N.C."/>
        </authorList>
    </citation>
    <scope>NUCLEOTIDE SEQUENCE [LARGE SCALE GENOMIC DNA]</scope>
    <source>
        <strain>JMP134 / LMG 1197</strain>
    </source>
</reference>
<accession>Q476N0</accession>
<proteinExistence type="inferred from homology"/>
<protein>
    <recommendedName>
        <fullName evidence="1">2,3-dihydroxyphenylpropionate/2,3-dihydroxicinnamic acid 1,2-dioxygenase</fullName>
        <ecNumber evidence="1">1.13.11.16</ecNumber>
    </recommendedName>
    <alternativeName>
        <fullName evidence="1">3-carboxyethylcatechol 2,3-dioxygenase</fullName>
    </alternativeName>
</protein>
<dbReference type="EC" id="1.13.11.16" evidence="1"/>
<dbReference type="EMBL" id="CP000090">
    <property type="protein sequence ID" value="AAZ59653.1"/>
    <property type="molecule type" value="Genomic_DNA"/>
</dbReference>
<dbReference type="SMR" id="Q476N0"/>
<dbReference type="STRING" id="264198.Reut_A0271"/>
<dbReference type="KEGG" id="reu:Reut_A0271"/>
<dbReference type="eggNOG" id="COG3384">
    <property type="taxonomic scope" value="Bacteria"/>
</dbReference>
<dbReference type="HOGENOM" id="CLU_078149_0_0_4"/>
<dbReference type="OrthoDB" id="8673673at2"/>
<dbReference type="UniPathway" id="UPA00714"/>
<dbReference type="GO" id="GO:0047070">
    <property type="term" value="F:3-carboxyethylcatechol 2,3-dioxygenase activity"/>
    <property type="evidence" value="ECO:0007669"/>
    <property type="project" value="UniProtKB-UniRule"/>
</dbReference>
<dbReference type="GO" id="GO:0008198">
    <property type="term" value="F:ferrous iron binding"/>
    <property type="evidence" value="ECO:0007669"/>
    <property type="project" value="InterPro"/>
</dbReference>
<dbReference type="GO" id="GO:0019380">
    <property type="term" value="P:3-phenylpropionate catabolic process"/>
    <property type="evidence" value="ECO:0007669"/>
    <property type="project" value="UniProtKB-UniRule"/>
</dbReference>
<dbReference type="CDD" id="cd07365">
    <property type="entry name" value="MhpB_like"/>
    <property type="match status" value="1"/>
</dbReference>
<dbReference type="Gene3D" id="3.40.830.10">
    <property type="entry name" value="LigB-like"/>
    <property type="match status" value="1"/>
</dbReference>
<dbReference type="HAMAP" id="MF_01653">
    <property type="entry name" value="MhpB"/>
    <property type="match status" value="1"/>
</dbReference>
<dbReference type="InterPro" id="IPR023789">
    <property type="entry name" value="DHPP/DHXA_dioxygenase"/>
</dbReference>
<dbReference type="InterPro" id="IPR004183">
    <property type="entry name" value="Xdiol_dOase_suB"/>
</dbReference>
<dbReference type="NCBIfam" id="NF009908">
    <property type="entry name" value="PRK13370.1-2"/>
    <property type="match status" value="1"/>
</dbReference>
<dbReference type="NCBIfam" id="NF009910">
    <property type="entry name" value="PRK13370.1-4"/>
    <property type="match status" value="1"/>
</dbReference>
<dbReference type="Pfam" id="PF02900">
    <property type="entry name" value="LigB"/>
    <property type="match status" value="1"/>
</dbReference>
<dbReference type="SUPFAM" id="SSF53213">
    <property type="entry name" value="LigB-like"/>
    <property type="match status" value="1"/>
</dbReference>
<feature type="chain" id="PRO_0000337664" description="2,3-dihydroxyphenylpropionate/2,3-dihydroxicinnamic acid 1,2-dioxygenase">
    <location>
        <begin position="1"/>
        <end position="314"/>
    </location>
</feature>
<feature type="active site" description="Proton donor" evidence="1">
    <location>
        <position position="115"/>
    </location>
</feature>
<feature type="active site" description="Proton acceptor" evidence="1">
    <location>
        <position position="179"/>
    </location>
</feature>
<evidence type="ECO:0000255" key="1">
    <source>
        <dbReference type="HAMAP-Rule" id="MF_01653"/>
    </source>
</evidence>